<organism>
    <name type="scientific">Rhodopseudomonas palustris (strain BisA53)</name>
    <dbReference type="NCBI Taxonomy" id="316055"/>
    <lineage>
        <taxon>Bacteria</taxon>
        <taxon>Pseudomonadati</taxon>
        <taxon>Pseudomonadota</taxon>
        <taxon>Alphaproteobacteria</taxon>
        <taxon>Hyphomicrobiales</taxon>
        <taxon>Nitrobacteraceae</taxon>
        <taxon>Rhodopseudomonas</taxon>
    </lineage>
</organism>
<evidence type="ECO:0000255" key="1">
    <source>
        <dbReference type="HAMAP-Rule" id="MF_01309"/>
    </source>
</evidence>
<evidence type="ECO:0000305" key="2"/>
<comment type="function">
    <text evidence="1">Binds the lower part of the 30S subunit head. Binds mRNA in the 70S ribosome, positioning it for translation.</text>
</comment>
<comment type="subunit">
    <text evidence="1">Part of the 30S ribosomal subunit. Forms a tight complex with proteins S10 and S14.</text>
</comment>
<comment type="similarity">
    <text evidence="1">Belongs to the universal ribosomal protein uS3 family.</text>
</comment>
<gene>
    <name evidence="1" type="primary">rpsC</name>
    <name type="ordered locus">RPE_3580</name>
</gene>
<proteinExistence type="inferred from homology"/>
<protein>
    <recommendedName>
        <fullName evidence="1">Small ribosomal subunit protein uS3</fullName>
    </recommendedName>
    <alternativeName>
        <fullName evidence="2">30S ribosomal protein S3</fullName>
    </alternativeName>
</protein>
<accession>Q07KM4</accession>
<sequence length="232" mass="26052">MGQKINPIGLRLGINRTWDSRWFAGKNEYGKLLHEDVKIRAILHKELKQAAVARIVIERPHKKCRVTIHSARPGVVIGKKGADIDKLRKKVADITASDVVINIVEIRKPELDATLVAESIAQQLERRVAFRRAMKRAVQSAMRLGAEGIRINCSGRLGGAEIARMEWYREGRVPLHTLRADIDYGVATAFTTFGTCGVKVWIFKGEILEHDPMAQDKRMAEGDNSRPRRDAA</sequence>
<dbReference type="EMBL" id="CP000463">
    <property type="protein sequence ID" value="ABJ07510.1"/>
    <property type="molecule type" value="Genomic_DNA"/>
</dbReference>
<dbReference type="SMR" id="Q07KM4"/>
<dbReference type="STRING" id="316055.RPE_3580"/>
<dbReference type="KEGG" id="rpe:RPE_3580"/>
<dbReference type="eggNOG" id="COG0092">
    <property type="taxonomic scope" value="Bacteria"/>
</dbReference>
<dbReference type="HOGENOM" id="CLU_058591_0_2_5"/>
<dbReference type="OrthoDB" id="9806396at2"/>
<dbReference type="GO" id="GO:0022627">
    <property type="term" value="C:cytosolic small ribosomal subunit"/>
    <property type="evidence" value="ECO:0007669"/>
    <property type="project" value="TreeGrafter"/>
</dbReference>
<dbReference type="GO" id="GO:0003729">
    <property type="term" value="F:mRNA binding"/>
    <property type="evidence" value="ECO:0007669"/>
    <property type="project" value="UniProtKB-UniRule"/>
</dbReference>
<dbReference type="GO" id="GO:0019843">
    <property type="term" value="F:rRNA binding"/>
    <property type="evidence" value="ECO:0007669"/>
    <property type="project" value="UniProtKB-UniRule"/>
</dbReference>
<dbReference type="GO" id="GO:0003735">
    <property type="term" value="F:structural constituent of ribosome"/>
    <property type="evidence" value="ECO:0007669"/>
    <property type="project" value="InterPro"/>
</dbReference>
<dbReference type="GO" id="GO:0006412">
    <property type="term" value="P:translation"/>
    <property type="evidence" value="ECO:0007669"/>
    <property type="project" value="UniProtKB-UniRule"/>
</dbReference>
<dbReference type="CDD" id="cd02412">
    <property type="entry name" value="KH-II_30S_S3"/>
    <property type="match status" value="1"/>
</dbReference>
<dbReference type="FunFam" id="3.30.1140.32:FF:000009">
    <property type="entry name" value="30S ribosomal protein S3"/>
    <property type="match status" value="1"/>
</dbReference>
<dbReference type="FunFam" id="3.30.300.20:FF:000001">
    <property type="entry name" value="30S ribosomal protein S3"/>
    <property type="match status" value="1"/>
</dbReference>
<dbReference type="Gene3D" id="3.30.300.20">
    <property type="match status" value="1"/>
</dbReference>
<dbReference type="Gene3D" id="3.30.1140.32">
    <property type="entry name" value="Ribosomal protein S3, C-terminal domain"/>
    <property type="match status" value="1"/>
</dbReference>
<dbReference type="HAMAP" id="MF_01309_B">
    <property type="entry name" value="Ribosomal_uS3_B"/>
    <property type="match status" value="1"/>
</dbReference>
<dbReference type="InterPro" id="IPR004087">
    <property type="entry name" value="KH_dom"/>
</dbReference>
<dbReference type="InterPro" id="IPR015946">
    <property type="entry name" value="KH_dom-like_a/b"/>
</dbReference>
<dbReference type="InterPro" id="IPR004044">
    <property type="entry name" value="KH_dom_type_2"/>
</dbReference>
<dbReference type="InterPro" id="IPR009019">
    <property type="entry name" value="KH_sf_prok-type"/>
</dbReference>
<dbReference type="InterPro" id="IPR036419">
    <property type="entry name" value="Ribosomal_S3_C_sf"/>
</dbReference>
<dbReference type="InterPro" id="IPR005704">
    <property type="entry name" value="Ribosomal_uS3_bac-typ"/>
</dbReference>
<dbReference type="InterPro" id="IPR001351">
    <property type="entry name" value="Ribosomal_uS3_C"/>
</dbReference>
<dbReference type="InterPro" id="IPR018280">
    <property type="entry name" value="Ribosomal_uS3_CS"/>
</dbReference>
<dbReference type="NCBIfam" id="TIGR01009">
    <property type="entry name" value="rpsC_bact"/>
    <property type="match status" value="1"/>
</dbReference>
<dbReference type="PANTHER" id="PTHR11760">
    <property type="entry name" value="30S/40S RIBOSOMAL PROTEIN S3"/>
    <property type="match status" value="1"/>
</dbReference>
<dbReference type="PANTHER" id="PTHR11760:SF19">
    <property type="entry name" value="SMALL RIBOSOMAL SUBUNIT PROTEIN US3C"/>
    <property type="match status" value="1"/>
</dbReference>
<dbReference type="Pfam" id="PF07650">
    <property type="entry name" value="KH_2"/>
    <property type="match status" value="1"/>
</dbReference>
<dbReference type="Pfam" id="PF00189">
    <property type="entry name" value="Ribosomal_S3_C"/>
    <property type="match status" value="1"/>
</dbReference>
<dbReference type="SMART" id="SM00322">
    <property type="entry name" value="KH"/>
    <property type="match status" value="1"/>
</dbReference>
<dbReference type="SUPFAM" id="SSF54814">
    <property type="entry name" value="Prokaryotic type KH domain (KH-domain type II)"/>
    <property type="match status" value="1"/>
</dbReference>
<dbReference type="SUPFAM" id="SSF54821">
    <property type="entry name" value="Ribosomal protein S3 C-terminal domain"/>
    <property type="match status" value="1"/>
</dbReference>
<dbReference type="PROSITE" id="PS50823">
    <property type="entry name" value="KH_TYPE_2"/>
    <property type="match status" value="1"/>
</dbReference>
<dbReference type="PROSITE" id="PS00548">
    <property type="entry name" value="RIBOSOMAL_S3"/>
    <property type="match status" value="1"/>
</dbReference>
<keyword id="KW-0687">Ribonucleoprotein</keyword>
<keyword id="KW-0689">Ribosomal protein</keyword>
<keyword id="KW-0694">RNA-binding</keyword>
<keyword id="KW-0699">rRNA-binding</keyword>
<reference key="1">
    <citation type="submission" date="2006-09" db="EMBL/GenBank/DDBJ databases">
        <title>Complete sequence of Rhodopseudomonas palustris BisA53.</title>
        <authorList>
            <consortium name="US DOE Joint Genome Institute"/>
            <person name="Copeland A."/>
            <person name="Lucas S."/>
            <person name="Lapidus A."/>
            <person name="Barry K."/>
            <person name="Detter J.C."/>
            <person name="Glavina del Rio T."/>
            <person name="Hammon N."/>
            <person name="Israni S."/>
            <person name="Dalin E."/>
            <person name="Tice H."/>
            <person name="Pitluck S."/>
            <person name="Chain P."/>
            <person name="Malfatti S."/>
            <person name="Shin M."/>
            <person name="Vergez L."/>
            <person name="Schmutz J."/>
            <person name="Larimer F."/>
            <person name="Land M."/>
            <person name="Hauser L."/>
            <person name="Pelletier D.A."/>
            <person name="Kyrpides N."/>
            <person name="Kim E."/>
            <person name="Harwood C.S."/>
            <person name="Oda Y."/>
            <person name="Richardson P."/>
        </authorList>
    </citation>
    <scope>NUCLEOTIDE SEQUENCE [LARGE SCALE GENOMIC DNA]</scope>
    <source>
        <strain>BisA53</strain>
    </source>
</reference>
<name>RS3_RHOP5</name>
<feature type="chain" id="PRO_0000293868" description="Small ribosomal subunit protein uS3">
    <location>
        <begin position="1"/>
        <end position="232"/>
    </location>
</feature>
<feature type="domain" description="KH type-2" evidence="1">
    <location>
        <begin position="39"/>
        <end position="107"/>
    </location>
</feature>